<gene>
    <name type="primary">nanH</name>
    <name type="ordered locus">VC_1784</name>
</gene>
<proteinExistence type="evidence at protein level"/>
<comment type="function">
    <text>Cleaves the terminal sialic acid (N-acetyl neuraminic acid) from carbohydrate chains in glycoproteins providing free sialic acid which can be used as carbon and energy sources. Sialidases have been suggested to be pathogenic factors in microbial infections. Facilitates cholera toxin binding to host intestinal epithelial cells by converting cell surface polysialogangliosides to GM1 monogangliosides.</text>
</comment>
<comment type="catalytic activity">
    <reaction>
        <text>Hydrolysis of alpha-(2-&gt;3)-, alpha-(2-&gt;6)-, alpha-(2-&gt;8)- glycosidic linkages of terminal sialic acid residues in oligosaccharides, glycoproteins, glycolipids, colominic acid and synthetic substrates.</text>
        <dbReference type="EC" id="3.2.1.18"/>
    </reaction>
</comment>
<comment type="cofactor">
    <cofactor>
        <name>Ca(2+)</name>
        <dbReference type="ChEBI" id="CHEBI:29108"/>
    </cofactor>
</comment>
<comment type="subunit">
    <text evidence="3">Monomer.</text>
</comment>
<comment type="subcellular location">
    <subcellularLocation>
        <location>Secreted</location>
    </subcellularLocation>
</comment>
<comment type="induction">
    <text>May be controlled by sialic acid availability and a growth-phase-dependent mechanism.</text>
</comment>
<comment type="similarity">
    <text evidence="3">Belongs to the glycosyl hydrolase 33 family.</text>
</comment>
<comment type="sequence caution" evidence="3">
    <conflict type="erroneous initiation">
        <sequence resource="EMBL-CDS" id="AAF94933"/>
    </conflict>
</comment>
<sequence>MRFKNVKKTALMLAMFGMATSSNAALFDYNATGDTEFDSPAKQGWMQDNTNNGSGVLTNADGMPAWLVQGIGGRAQWTYSLSTNQHAQASSFGWRMTTEMKVLSGGMITNYYANGTQRVLPIISLDSSGNLVVEFEGQTGRTVLATGTAATEYHKFELVFLPGSNPSASFYFDGKLIRDNIQPTASKQNMIVWGNGSSNTDGVAAYRDIKFEIQGDVIFRGPDRIPSIVASSVTPGVVTAFAEKRVGGGDPGALSNTNDIITRTSRDGGITWDTELNLTEQINVSDEFDFSDPRPIYDPSSNTVLVSYARWPTDAAQNGDRIKPWMPNGIFYSVYDVASGNWQAPIDVTDQVKERSFQIAGWGGSELYRRNTSLNSQQDWQSNAKIRIVDGAANQIQVADGSRKYVVTLSIDESGGLVANLNGVSAPIILQSEHAKVHSFHDYELQYSALNHTTTLFVDGQQITTWAGEVSQENNIQFGNADAQIDGRLHVQKIVLTQQGHNLVEFDAFYLAQQTPEVEKDLEKLGWTKIKTGNTMSLYGNASVNPGPGHGITLTRQQNISGSQNGRLIYPAIVLDRFFLNVMSIYSDDGGSNWQTGSTLPIPFRWKSSSILETLEPSEADMVELQNGDLLLTARLDFNQIVNGVNYSPRQQFLSKDGGITWSLLEANNANVFSNISTGTVDASITRFEQSDGSHFLLFTNPQGNPAGTNGRQNLGLWFSFDEGVTWKGPIQLVNGASAYSDIYQLDSENAIVIVETDNSNMRILRMPITLLKQKLTLSQN</sequence>
<evidence type="ECO:0000250" key="1"/>
<evidence type="ECO:0000255" key="2"/>
<evidence type="ECO:0000305" key="3"/>
<evidence type="ECO:0007829" key="4">
    <source>
        <dbReference type="PDB" id="1KIT"/>
    </source>
</evidence>
<evidence type="ECO:0007829" key="5">
    <source>
        <dbReference type="PDB" id="1W0P"/>
    </source>
</evidence>
<evidence type="ECO:0007829" key="6">
    <source>
        <dbReference type="PDB" id="6EKU"/>
    </source>
</evidence>
<name>NANH_VIBCH</name>
<feature type="signal peptide" evidence="1">
    <location>
        <begin position="1"/>
        <end position="24"/>
    </location>
</feature>
<feature type="chain" id="PRO_0000012033" description="Sialidase">
    <location>
        <begin position="25"/>
        <end position="781"/>
    </location>
</feature>
<feature type="repeat" description="BNR 1">
    <location>
        <begin position="263"/>
        <end position="274"/>
    </location>
</feature>
<feature type="repeat" description="BNR 2">
    <location>
        <begin position="585"/>
        <end position="596"/>
    </location>
</feature>
<feature type="repeat" description="BNR 3">
    <location>
        <begin position="653"/>
        <end position="664"/>
    </location>
</feature>
<feature type="repeat" description="BNR 4">
    <location>
        <begin position="718"/>
        <end position="729"/>
    </location>
</feature>
<feature type="active site" description="Proton acceptor" evidence="1">
    <location>
        <position position="250"/>
    </location>
</feature>
<feature type="active site" evidence="2">
    <location>
        <position position="619"/>
    </location>
</feature>
<feature type="active site" description="Nucleophile" evidence="1">
    <location>
        <position position="740"/>
    </location>
</feature>
<feature type="binding site" evidence="1">
    <location>
        <position position="224"/>
    </location>
    <ligand>
        <name>substrate</name>
    </ligand>
</feature>
<feature type="binding site" evidence="1">
    <location>
        <position position="635"/>
    </location>
    <ligand>
        <name>substrate</name>
    </ligand>
</feature>
<feature type="binding site" evidence="1">
    <location>
        <position position="712"/>
    </location>
    <ligand>
        <name>substrate</name>
    </ligand>
</feature>
<feature type="strand" evidence="5">
    <location>
        <begin position="26"/>
        <end position="30"/>
    </location>
</feature>
<feature type="helix" evidence="5">
    <location>
        <begin position="35"/>
        <end position="37"/>
    </location>
</feature>
<feature type="helix" evidence="5">
    <location>
        <begin position="40"/>
        <end position="43"/>
    </location>
</feature>
<feature type="strand" evidence="6">
    <location>
        <begin position="46"/>
        <end position="49"/>
    </location>
</feature>
<feature type="strand" evidence="5">
    <location>
        <begin position="54"/>
        <end position="62"/>
    </location>
</feature>
<feature type="strand" evidence="5">
    <location>
        <begin position="64"/>
        <end position="73"/>
    </location>
</feature>
<feature type="strand" evidence="5">
    <location>
        <begin position="75"/>
        <end position="79"/>
    </location>
</feature>
<feature type="helix" evidence="5">
    <location>
        <begin position="83"/>
        <end position="92"/>
    </location>
</feature>
<feature type="strand" evidence="5">
    <location>
        <begin position="94"/>
        <end position="106"/>
    </location>
</feature>
<feature type="strand" evidence="5">
    <location>
        <begin position="111"/>
        <end position="113"/>
    </location>
</feature>
<feature type="strand" evidence="5">
    <location>
        <begin position="115"/>
        <end position="119"/>
    </location>
</feature>
<feature type="strand" evidence="5">
    <location>
        <begin position="121"/>
        <end position="125"/>
    </location>
</feature>
<feature type="strand" evidence="5">
    <location>
        <begin position="131"/>
        <end position="135"/>
    </location>
</feature>
<feature type="strand" evidence="5">
    <location>
        <begin position="142"/>
        <end position="145"/>
    </location>
</feature>
<feature type="helix" evidence="5">
    <location>
        <begin position="147"/>
        <end position="151"/>
    </location>
</feature>
<feature type="strand" evidence="5">
    <location>
        <begin position="154"/>
        <end position="161"/>
    </location>
</feature>
<feature type="strand" evidence="5">
    <location>
        <begin position="163"/>
        <end position="165"/>
    </location>
</feature>
<feature type="strand" evidence="5">
    <location>
        <begin position="167"/>
        <end position="172"/>
    </location>
</feature>
<feature type="strand" evidence="5">
    <location>
        <begin position="175"/>
        <end position="181"/>
    </location>
</feature>
<feature type="strand" evidence="5">
    <location>
        <begin position="190"/>
        <end position="195"/>
    </location>
</feature>
<feature type="strand" evidence="5">
    <location>
        <begin position="198"/>
        <end position="200"/>
    </location>
</feature>
<feature type="strand" evidence="5">
    <location>
        <begin position="202"/>
        <end position="213"/>
    </location>
</feature>
<feature type="strand" evidence="5">
    <location>
        <begin position="216"/>
        <end position="219"/>
    </location>
</feature>
<feature type="strand" evidence="5">
    <location>
        <begin position="224"/>
        <end position="230"/>
    </location>
</feature>
<feature type="strand" evidence="5">
    <location>
        <begin position="232"/>
        <end position="234"/>
    </location>
</feature>
<feature type="strand" evidence="5">
    <location>
        <begin position="238"/>
        <end position="246"/>
    </location>
</feature>
<feature type="strand" evidence="5">
    <location>
        <begin position="257"/>
        <end position="271"/>
    </location>
</feature>
<feature type="strand" evidence="5">
    <location>
        <begin position="276"/>
        <end position="279"/>
    </location>
</feature>
<feature type="helix" evidence="5">
    <location>
        <begin position="280"/>
        <end position="282"/>
    </location>
</feature>
<feature type="strand" evidence="4">
    <location>
        <begin position="284"/>
        <end position="286"/>
    </location>
</feature>
<feature type="strand" evidence="5">
    <location>
        <begin position="288"/>
        <end position="298"/>
    </location>
</feature>
<feature type="turn" evidence="5">
    <location>
        <begin position="299"/>
        <end position="302"/>
    </location>
</feature>
<feature type="strand" evidence="5">
    <location>
        <begin position="303"/>
        <end position="312"/>
    </location>
</feature>
<feature type="helix" evidence="5">
    <location>
        <begin position="318"/>
        <end position="320"/>
    </location>
</feature>
<feature type="strand" evidence="5">
    <location>
        <begin position="329"/>
        <end position="336"/>
    </location>
</feature>
<feature type="turn" evidence="5">
    <location>
        <begin position="337"/>
        <end position="340"/>
    </location>
</feature>
<feature type="strand" evidence="6">
    <location>
        <begin position="341"/>
        <end position="347"/>
    </location>
</feature>
<feature type="helix" evidence="5">
    <location>
        <begin position="349"/>
        <end position="352"/>
    </location>
</feature>
<feature type="strand" evidence="5">
    <location>
        <begin position="357"/>
        <end position="371"/>
    </location>
</feature>
<feature type="strand" evidence="5">
    <location>
        <begin position="380"/>
        <end position="392"/>
    </location>
</feature>
<feature type="strand" evidence="5">
    <location>
        <begin position="394"/>
        <end position="411"/>
    </location>
</feature>
<feature type="strand" evidence="5">
    <location>
        <begin position="417"/>
        <end position="421"/>
    </location>
</feature>
<feature type="strand" evidence="5">
    <location>
        <begin position="428"/>
        <end position="431"/>
    </location>
</feature>
<feature type="helix" evidence="5">
    <location>
        <begin position="434"/>
        <end position="437"/>
    </location>
</feature>
<feature type="strand" evidence="5">
    <location>
        <begin position="441"/>
        <end position="448"/>
    </location>
</feature>
<feature type="turn" evidence="5">
    <location>
        <begin position="449"/>
        <end position="452"/>
    </location>
</feature>
<feature type="strand" evidence="5">
    <location>
        <begin position="453"/>
        <end position="458"/>
    </location>
</feature>
<feature type="strand" evidence="5">
    <location>
        <begin position="461"/>
        <end position="466"/>
    </location>
</feature>
<feature type="strand" evidence="5">
    <location>
        <begin position="474"/>
        <end position="480"/>
    </location>
</feature>
<feature type="strand" evidence="4">
    <location>
        <begin position="483"/>
        <end position="485"/>
    </location>
</feature>
<feature type="strand" evidence="5">
    <location>
        <begin position="487"/>
        <end position="498"/>
    </location>
</feature>
<feature type="strand" evidence="5">
    <location>
        <begin position="501"/>
        <end position="506"/>
    </location>
</feature>
<feature type="helix" evidence="5">
    <location>
        <begin position="508"/>
        <end position="512"/>
    </location>
</feature>
<feature type="helix" evidence="5">
    <location>
        <begin position="522"/>
        <end position="524"/>
    </location>
</feature>
<feature type="strand" evidence="5">
    <location>
        <begin position="528"/>
        <end position="534"/>
    </location>
</feature>
<feature type="strand" evidence="5">
    <location>
        <begin position="536"/>
        <end position="540"/>
    </location>
</feature>
<feature type="strand" evidence="5">
    <location>
        <begin position="542"/>
        <end position="545"/>
    </location>
</feature>
<feature type="strand" evidence="5">
    <location>
        <begin position="568"/>
        <end position="578"/>
    </location>
</feature>
<feature type="strand" evidence="5">
    <location>
        <begin position="580"/>
        <end position="593"/>
    </location>
</feature>
<feature type="strand" evidence="6">
    <location>
        <begin position="595"/>
        <end position="599"/>
    </location>
</feature>
<feature type="strand" evidence="5">
    <location>
        <begin position="604"/>
        <end position="610"/>
    </location>
</feature>
<feature type="strand" evidence="5">
    <location>
        <begin position="612"/>
        <end position="614"/>
    </location>
</feature>
<feature type="strand" evidence="5">
    <location>
        <begin position="616"/>
        <end position="624"/>
    </location>
</feature>
<feature type="strand" evidence="5">
    <location>
        <begin position="630"/>
        <end position="638"/>
    </location>
</feature>
<feature type="strand" evidence="5">
    <location>
        <begin position="649"/>
        <end position="661"/>
    </location>
</feature>
<feature type="strand" evidence="5">
    <location>
        <begin position="663"/>
        <end position="669"/>
    </location>
</feature>
<feature type="helix" evidence="5">
    <location>
        <begin position="670"/>
        <end position="672"/>
    </location>
</feature>
<feature type="strand" evidence="5">
    <location>
        <begin position="684"/>
        <end position="689"/>
    </location>
</feature>
<feature type="strand" evidence="5">
    <location>
        <begin position="695"/>
        <end position="702"/>
    </location>
</feature>
<feature type="turn" evidence="5">
    <location>
        <begin position="704"/>
        <end position="708"/>
    </location>
</feature>
<feature type="strand" evidence="5">
    <location>
        <begin position="709"/>
        <end position="722"/>
    </location>
</feature>
<feature type="strand" evidence="5">
    <location>
        <begin position="728"/>
        <end position="732"/>
    </location>
</feature>
<feature type="strand" evidence="5">
    <location>
        <begin position="735"/>
        <end position="737"/>
    </location>
</feature>
<feature type="strand" evidence="5">
    <location>
        <begin position="740"/>
        <end position="745"/>
    </location>
</feature>
<feature type="strand" evidence="5">
    <location>
        <begin position="747"/>
        <end position="756"/>
    </location>
</feature>
<feature type="helix" evidence="5">
    <location>
        <begin position="758"/>
        <end position="760"/>
    </location>
</feature>
<feature type="strand" evidence="5">
    <location>
        <begin position="762"/>
        <end position="768"/>
    </location>
</feature>
<feature type="helix" evidence="5">
    <location>
        <begin position="769"/>
        <end position="772"/>
    </location>
</feature>
<feature type="helix" evidence="5">
    <location>
        <begin position="773"/>
        <end position="775"/>
    </location>
</feature>
<reference key="1">
    <citation type="journal article" date="2000" name="Nature">
        <title>DNA sequence of both chromosomes of the cholera pathogen Vibrio cholerae.</title>
        <authorList>
            <person name="Heidelberg J.F."/>
            <person name="Eisen J.A."/>
            <person name="Nelson W.C."/>
            <person name="Clayton R.A."/>
            <person name="Gwinn M.L."/>
            <person name="Dodson R.J."/>
            <person name="Haft D.H."/>
            <person name="Hickey E.K."/>
            <person name="Peterson J.D."/>
            <person name="Umayam L.A."/>
            <person name="Gill S.R."/>
            <person name="Nelson K.E."/>
            <person name="Read T.D."/>
            <person name="Tettelin H."/>
            <person name="Richardson D.L."/>
            <person name="Ermolaeva M.D."/>
            <person name="Vamathevan J.J."/>
            <person name="Bass S."/>
            <person name="Qin H."/>
            <person name="Dragoi I."/>
            <person name="Sellers P."/>
            <person name="McDonald L.A."/>
            <person name="Utterback T.R."/>
            <person name="Fleischmann R.D."/>
            <person name="Nierman W.C."/>
            <person name="White O."/>
            <person name="Salzberg S.L."/>
            <person name="Smith H.O."/>
            <person name="Colwell R.R."/>
            <person name="Mekalanos J.J."/>
            <person name="Venter J.C."/>
            <person name="Fraser C.M."/>
        </authorList>
    </citation>
    <scope>NUCLEOTIDE SEQUENCE [LARGE SCALE GENOMIC DNA]</scope>
    <source>
        <strain>ATCC 39315 / El Tor Inaba N16961</strain>
    </source>
</reference>
<reference key="2">
    <citation type="journal article" date="1992" name="J. Mol. Biol.">
        <title>Purification, crystallization and preliminary crystallographic study of neuraminidase from Vibrio cholerae and Salmonella typhimurium LT2.</title>
        <authorList>
            <person name="Taylor G.L."/>
            <person name="Vimr E.R."/>
            <person name="Garman E.F."/>
            <person name="Laver W.G."/>
        </authorList>
    </citation>
    <scope>CHARACTERIZATION</scope>
    <scope>X-RAY CRYSTALLOGRAPHY (2.5 ANGSTROMS)</scope>
</reference>
<reference key="3">
    <citation type="journal article" date="1994" name="Structure">
        <title>Crystal structure of Vibrio cholerae neuraminidase reveals dual lectin-like domains in addition to the catalytic domain.</title>
        <authorList>
            <person name="Crenells S."/>
            <person name="Garman E.F."/>
            <person name="Laver W.G."/>
            <person name="Vimr E.R."/>
            <person name="Taylor G.L."/>
        </authorList>
    </citation>
    <scope>X-RAY CRYSTALLOGRAPHY (2.3 ANGSTROMS)</scope>
</reference>
<accession>P0C6E9</accession>
<accession>P37060</accession>
<accession>Q9KR59</accession>
<organism>
    <name type="scientific">Vibrio cholerae serotype O1 (strain ATCC 39315 / El Tor Inaba N16961)</name>
    <dbReference type="NCBI Taxonomy" id="243277"/>
    <lineage>
        <taxon>Bacteria</taxon>
        <taxon>Pseudomonadati</taxon>
        <taxon>Pseudomonadota</taxon>
        <taxon>Gammaproteobacteria</taxon>
        <taxon>Vibrionales</taxon>
        <taxon>Vibrionaceae</taxon>
        <taxon>Vibrio</taxon>
    </lineage>
</organism>
<dbReference type="EC" id="3.2.1.18"/>
<dbReference type="EMBL" id="AE003852">
    <property type="protein sequence ID" value="AAF94933.1"/>
    <property type="status" value="ALT_INIT"/>
    <property type="molecule type" value="Genomic_DNA"/>
</dbReference>
<dbReference type="PIR" id="E82158">
    <property type="entry name" value="E82158"/>
</dbReference>
<dbReference type="RefSeq" id="NP_231419.1">
    <property type="nucleotide sequence ID" value="NC_002505.1"/>
</dbReference>
<dbReference type="RefSeq" id="WP_001211290.1">
    <property type="nucleotide sequence ID" value="NZ_LT906614.1"/>
</dbReference>
<dbReference type="PDB" id="1KIT">
    <property type="method" value="X-ray"/>
    <property type="resolution" value="2.30 A"/>
    <property type="chains" value="A=25-781"/>
</dbReference>
<dbReference type="PDB" id="1W0O">
    <property type="method" value="X-ray"/>
    <property type="resolution" value="1.90 A"/>
    <property type="chains" value="A=1-781"/>
</dbReference>
<dbReference type="PDB" id="1W0P">
    <property type="method" value="X-ray"/>
    <property type="resolution" value="1.60 A"/>
    <property type="chains" value="A=1-781"/>
</dbReference>
<dbReference type="PDB" id="2W68">
    <property type="method" value="X-ray"/>
    <property type="resolution" value="2.50 A"/>
    <property type="chains" value="A/B/C=25-216"/>
</dbReference>
<dbReference type="PDB" id="6EKS">
    <property type="method" value="X-ray"/>
    <property type="resolution" value="1.87 A"/>
    <property type="chains" value="A=25-781"/>
</dbReference>
<dbReference type="PDB" id="6EKU">
    <property type="method" value="X-ray"/>
    <property type="resolution" value="1.75 A"/>
    <property type="chains" value="A=25-781"/>
</dbReference>
<dbReference type="PDBsum" id="1KIT"/>
<dbReference type="PDBsum" id="1W0O"/>
<dbReference type="PDBsum" id="1W0P"/>
<dbReference type="PDBsum" id="2W68"/>
<dbReference type="PDBsum" id="6EKS"/>
<dbReference type="PDBsum" id="6EKU"/>
<dbReference type="PCDDB" id="P0C6E9"/>
<dbReference type="SMR" id="P0C6E9"/>
<dbReference type="STRING" id="243277.VC_1784"/>
<dbReference type="BindingDB" id="P0C6E9"/>
<dbReference type="ChEMBL" id="CHEMBL1075100"/>
<dbReference type="CAZy" id="CBM40">
    <property type="family name" value="Carbohydrate-Binding Module Family 40"/>
</dbReference>
<dbReference type="CAZy" id="GH33">
    <property type="family name" value="Glycoside Hydrolase Family 33"/>
</dbReference>
<dbReference type="DNASU" id="2613664"/>
<dbReference type="EnsemblBacteria" id="AAF94933">
    <property type="protein sequence ID" value="AAF94933"/>
    <property type="gene ID" value="VC_1784"/>
</dbReference>
<dbReference type="KEGG" id="vch:VC_1784"/>
<dbReference type="PATRIC" id="fig|243277.26.peg.1703"/>
<dbReference type="eggNOG" id="COG4409">
    <property type="taxonomic scope" value="Bacteria"/>
</dbReference>
<dbReference type="HOGENOM" id="CLU_376807_0_0_6"/>
<dbReference type="BRENDA" id="3.2.1.18">
    <property type="organism ID" value="6626"/>
</dbReference>
<dbReference type="EvolutionaryTrace" id="P0C6E9"/>
<dbReference type="PRO" id="PR:P0C6E9"/>
<dbReference type="Proteomes" id="UP000000584">
    <property type="component" value="Chromosome 1"/>
</dbReference>
<dbReference type="GO" id="GO:0005737">
    <property type="term" value="C:cytoplasm"/>
    <property type="evidence" value="ECO:0000318"/>
    <property type="project" value="GO_Central"/>
</dbReference>
<dbReference type="GO" id="GO:0005576">
    <property type="term" value="C:extracellular region"/>
    <property type="evidence" value="ECO:0007669"/>
    <property type="project" value="UniProtKB-SubCell"/>
</dbReference>
<dbReference type="GO" id="GO:0043231">
    <property type="term" value="C:intracellular membrane-bounded organelle"/>
    <property type="evidence" value="ECO:0000318"/>
    <property type="project" value="GO_Central"/>
</dbReference>
<dbReference type="GO" id="GO:0016020">
    <property type="term" value="C:membrane"/>
    <property type="evidence" value="ECO:0000318"/>
    <property type="project" value="GO_Central"/>
</dbReference>
<dbReference type="GO" id="GO:0004308">
    <property type="term" value="F:exo-alpha-sialidase activity"/>
    <property type="evidence" value="ECO:0000318"/>
    <property type="project" value="GO_Central"/>
</dbReference>
<dbReference type="GO" id="GO:0033691">
    <property type="term" value="F:sialic acid binding"/>
    <property type="evidence" value="ECO:0007669"/>
    <property type="project" value="InterPro"/>
</dbReference>
<dbReference type="GO" id="GO:0006689">
    <property type="term" value="P:ganglioside catabolic process"/>
    <property type="evidence" value="ECO:0000318"/>
    <property type="project" value="GO_Central"/>
</dbReference>
<dbReference type="GO" id="GO:0009313">
    <property type="term" value="P:oligosaccharide catabolic process"/>
    <property type="evidence" value="ECO:0000318"/>
    <property type="project" value="GO_Central"/>
</dbReference>
<dbReference type="CDD" id="cd15482">
    <property type="entry name" value="Sialidase_non-viral"/>
    <property type="match status" value="1"/>
</dbReference>
<dbReference type="FunFam" id="2.60.120.200:FF:000298">
    <property type="entry name" value="Sialidase"/>
    <property type="match status" value="1"/>
</dbReference>
<dbReference type="Gene3D" id="2.120.10.10">
    <property type="match status" value="1"/>
</dbReference>
<dbReference type="Gene3D" id="2.60.120.200">
    <property type="match status" value="2"/>
</dbReference>
<dbReference type="InterPro" id="IPR013320">
    <property type="entry name" value="ConA-like_dom_sf"/>
</dbReference>
<dbReference type="InterPro" id="IPR011040">
    <property type="entry name" value="Sialidase"/>
</dbReference>
<dbReference type="InterPro" id="IPR026856">
    <property type="entry name" value="Sialidase_fam"/>
</dbReference>
<dbReference type="InterPro" id="IPR036278">
    <property type="entry name" value="Sialidase_sf"/>
</dbReference>
<dbReference type="InterPro" id="IPR015344">
    <property type="entry name" value="VCNA_lectin-like_dom"/>
</dbReference>
<dbReference type="PANTHER" id="PTHR10628:SF30">
    <property type="entry name" value="EXO-ALPHA-SIALIDASE"/>
    <property type="match status" value="1"/>
</dbReference>
<dbReference type="PANTHER" id="PTHR10628">
    <property type="entry name" value="SIALIDASE"/>
    <property type="match status" value="1"/>
</dbReference>
<dbReference type="Pfam" id="PF13088">
    <property type="entry name" value="BNR_2"/>
    <property type="match status" value="1"/>
</dbReference>
<dbReference type="Pfam" id="PF09264">
    <property type="entry name" value="Sial-lect-inser"/>
    <property type="match status" value="2"/>
</dbReference>
<dbReference type="SUPFAM" id="SSF49899">
    <property type="entry name" value="Concanavalin A-like lectins/glucanases"/>
    <property type="match status" value="2"/>
</dbReference>
<dbReference type="SUPFAM" id="SSF50939">
    <property type="entry name" value="Sialidases"/>
    <property type="match status" value="1"/>
</dbReference>
<keyword id="KW-0002">3D-structure</keyword>
<keyword id="KW-0106">Calcium</keyword>
<keyword id="KW-0326">Glycosidase</keyword>
<keyword id="KW-0378">Hydrolase</keyword>
<keyword id="KW-1185">Reference proteome</keyword>
<keyword id="KW-0677">Repeat</keyword>
<keyword id="KW-0964">Secreted</keyword>
<keyword id="KW-0732">Signal</keyword>
<protein>
    <recommendedName>
        <fullName>Sialidase</fullName>
        <ecNumber>3.2.1.18</ecNumber>
    </recommendedName>
    <alternativeName>
        <fullName>Neuraminidase</fullName>
        <shortName>NANase</shortName>
    </alternativeName>
</protein>